<protein>
    <recommendedName>
        <fullName evidence="1">Small ribosomal subunit protein uS14</fullName>
    </recommendedName>
    <alternativeName>
        <fullName evidence="2">30S ribosomal protein S14</fullName>
    </alternativeName>
</protein>
<evidence type="ECO:0000255" key="1">
    <source>
        <dbReference type="HAMAP-Rule" id="MF_00537"/>
    </source>
</evidence>
<evidence type="ECO:0000305" key="2"/>
<reference key="1">
    <citation type="journal article" date="2006" name="Genome Biol.">
        <title>Genomic analysis reveals that Pseudomonas aeruginosa virulence is combinatorial.</title>
        <authorList>
            <person name="Lee D.G."/>
            <person name="Urbach J.M."/>
            <person name="Wu G."/>
            <person name="Liberati N.T."/>
            <person name="Feinbaum R.L."/>
            <person name="Miyata S."/>
            <person name="Diggins L.T."/>
            <person name="He J."/>
            <person name="Saucier M."/>
            <person name="Deziel E."/>
            <person name="Friedman L."/>
            <person name="Li L."/>
            <person name="Grills G."/>
            <person name="Montgomery K."/>
            <person name="Kucherlapati R."/>
            <person name="Rahme L.G."/>
            <person name="Ausubel F.M."/>
        </authorList>
    </citation>
    <scope>NUCLEOTIDE SEQUENCE [LARGE SCALE GENOMIC DNA]</scope>
    <source>
        <strain>UCBPP-PA14</strain>
    </source>
</reference>
<keyword id="KW-0687">Ribonucleoprotein</keyword>
<keyword id="KW-0689">Ribosomal protein</keyword>
<keyword id="KW-0694">RNA-binding</keyword>
<keyword id="KW-0699">rRNA-binding</keyword>
<sequence length="101" mass="11565">MAKESMKNRELKRQLTVAKYAKKRAELKAIIANPNSSAEERWNAQVALQKQPRDASASRLRNRCRLTGRPHGFYRKFGLSRNKLREAAMRGDVPGLVKASW</sequence>
<dbReference type="EMBL" id="CP000438">
    <property type="protein sequence ID" value="ABJ13521.1"/>
    <property type="molecule type" value="Genomic_DNA"/>
</dbReference>
<dbReference type="RefSeq" id="WP_003093701.1">
    <property type="nucleotide sequence ID" value="NZ_CP034244.1"/>
</dbReference>
<dbReference type="SMR" id="Q02T67"/>
<dbReference type="GeneID" id="77219211"/>
<dbReference type="KEGG" id="pau:PA14_08980"/>
<dbReference type="PseudoCAP" id="PA14_08980"/>
<dbReference type="HOGENOM" id="CLU_139869_0_1_6"/>
<dbReference type="BioCyc" id="PAER208963:G1G74-749-MONOMER"/>
<dbReference type="Proteomes" id="UP000000653">
    <property type="component" value="Chromosome"/>
</dbReference>
<dbReference type="GO" id="GO:0005737">
    <property type="term" value="C:cytoplasm"/>
    <property type="evidence" value="ECO:0007669"/>
    <property type="project" value="UniProtKB-ARBA"/>
</dbReference>
<dbReference type="GO" id="GO:0015935">
    <property type="term" value="C:small ribosomal subunit"/>
    <property type="evidence" value="ECO:0007669"/>
    <property type="project" value="TreeGrafter"/>
</dbReference>
<dbReference type="GO" id="GO:0019843">
    <property type="term" value="F:rRNA binding"/>
    <property type="evidence" value="ECO:0007669"/>
    <property type="project" value="UniProtKB-UniRule"/>
</dbReference>
<dbReference type="GO" id="GO:0003735">
    <property type="term" value="F:structural constituent of ribosome"/>
    <property type="evidence" value="ECO:0007669"/>
    <property type="project" value="InterPro"/>
</dbReference>
<dbReference type="GO" id="GO:0006412">
    <property type="term" value="P:translation"/>
    <property type="evidence" value="ECO:0007669"/>
    <property type="project" value="UniProtKB-UniRule"/>
</dbReference>
<dbReference type="FunFam" id="1.10.287.1480:FF:000001">
    <property type="entry name" value="30S ribosomal protein S14"/>
    <property type="match status" value="1"/>
</dbReference>
<dbReference type="Gene3D" id="1.10.287.1480">
    <property type="match status" value="1"/>
</dbReference>
<dbReference type="HAMAP" id="MF_00537">
    <property type="entry name" value="Ribosomal_uS14_1"/>
    <property type="match status" value="1"/>
</dbReference>
<dbReference type="InterPro" id="IPR001209">
    <property type="entry name" value="Ribosomal_uS14"/>
</dbReference>
<dbReference type="InterPro" id="IPR023036">
    <property type="entry name" value="Ribosomal_uS14_bac/plastid"/>
</dbReference>
<dbReference type="InterPro" id="IPR018271">
    <property type="entry name" value="Ribosomal_uS14_CS"/>
</dbReference>
<dbReference type="NCBIfam" id="NF006477">
    <property type="entry name" value="PRK08881.1"/>
    <property type="match status" value="1"/>
</dbReference>
<dbReference type="PANTHER" id="PTHR19836">
    <property type="entry name" value="30S RIBOSOMAL PROTEIN S14"/>
    <property type="match status" value="1"/>
</dbReference>
<dbReference type="PANTHER" id="PTHR19836:SF19">
    <property type="entry name" value="SMALL RIBOSOMAL SUBUNIT PROTEIN US14M"/>
    <property type="match status" value="1"/>
</dbReference>
<dbReference type="Pfam" id="PF00253">
    <property type="entry name" value="Ribosomal_S14"/>
    <property type="match status" value="1"/>
</dbReference>
<dbReference type="SUPFAM" id="SSF57716">
    <property type="entry name" value="Glucocorticoid receptor-like (DNA-binding domain)"/>
    <property type="match status" value="1"/>
</dbReference>
<dbReference type="PROSITE" id="PS00527">
    <property type="entry name" value="RIBOSOMAL_S14"/>
    <property type="match status" value="1"/>
</dbReference>
<gene>
    <name evidence="1" type="primary">rpsN</name>
    <name type="ordered locus">PA14_08980</name>
</gene>
<feature type="chain" id="PRO_1000128512" description="Small ribosomal subunit protein uS14">
    <location>
        <begin position="1"/>
        <end position="101"/>
    </location>
</feature>
<accession>Q02T67</accession>
<proteinExistence type="inferred from homology"/>
<comment type="function">
    <text evidence="1">Binds 16S rRNA, required for the assembly of 30S particles and may also be responsible for determining the conformation of the 16S rRNA at the A site.</text>
</comment>
<comment type="subunit">
    <text evidence="1">Part of the 30S ribosomal subunit. Contacts proteins S3 and S10.</text>
</comment>
<comment type="similarity">
    <text evidence="1">Belongs to the universal ribosomal protein uS14 family.</text>
</comment>
<organism>
    <name type="scientific">Pseudomonas aeruginosa (strain UCBPP-PA14)</name>
    <dbReference type="NCBI Taxonomy" id="208963"/>
    <lineage>
        <taxon>Bacteria</taxon>
        <taxon>Pseudomonadati</taxon>
        <taxon>Pseudomonadota</taxon>
        <taxon>Gammaproteobacteria</taxon>
        <taxon>Pseudomonadales</taxon>
        <taxon>Pseudomonadaceae</taxon>
        <taxon>Pseudomonas</taxon>
    </lineage>
</organism>
<name>RS14_PSEAB</name>